<accession>A0A1P8VF85</accession>
<comment type="function">
    <text evidence="9 10 11">Dehydrogenase; part of the gene cluster that mediates the biosynthesis of azaphilone pigments (MonAzPs), a complex mixture of compounds with a common azaphilone skeleton very widely used as food colorants (PubMed:26946170, PubMed:28959415, PubMed:34220766). Within the pathway, pigH might be involved in the late steps of yellow pigments monascin and ankaflavin biosynthesis (PubMed:28959415). The first step of the pathway is performed by the nrPKS pigA that forms the hexaketide precursor from successive condensations of five malonyl-CoA units, with a simple acetyl-CoA starter unit. The role of esterase pigG is not clear, but it may play at most a supplementary role in the formation of the benzaldehyde produced by the pigA nrPKS. This very reactive benzaldehyde is intercepted by the pigC ketoreductase that to provide the first stable enzyme-free MonAzPs intermediate, 6-(4-hydroxy-2-oxopentyl)-3-methyl-2,4-dioxocyclohexane carbaldehyde, also known as M7PKS-1. The FAD-dependent monooxygenase pigN hydroxylates M7PKS-1 at C-4, which triggers the formation of the pyran ring. PigJ, pigK and pigD are involved in the acetylation of the pyran ring. PigJ and pigK form the two subunits of a dedicated fungal FAS that produces the side chain fatty acyl moiety of MonAzPs and pigD transfers the fatty acyl chain to the C-4 alcohol. PigM and pigO are involved in the elimination of the omega-1 alcohol. PigM acts as an O-acetyltransferase that synthesizes the putative O-11 acetyl intermediate whereas pigO eliminates acetic acid to yield an intermediate with a C10(11) double bond. The dehydration of the C-11 alcohol followed by the reduction of the C6(7) double bond by the NAD(P)H-dependent oxidoreductase pigE increases the electrophilicity of the C-5 ketone of the resulting acyl benzopyran. This in turn sets up the C-5 ketone for an intramolecular Knoevenagel aldol condensation with the C-20 enol of the side chain. This condensation affords the characteristic linear tricyclic carbon skeletons of the yellow pigments that serve as the common precursors for the classical yellow pigments monascin and ankaflavin, orange pigments rubopunctatin and monascorubrin, and red pigments ribropunctamine and monascorubramine. The FAD-dependent oxidoreductase pigF is especially invoved in the biosynthesis of orange and red pigments via desaturation of C6(7) (PubMed:28959415).</text>
</comment>
<comment type="pathway">
    <text evidence="9 10">Secondary metabolite biosynthesis.</text>
</comment>
<comment type="subcellular location">
    <subcellularLocation>
        <location evidence="2">Membrane</location>
        <topology evidence="2">Single-pass membrane protein</topology>
    </subcellularLocation>
</comment>
<comment type="induction">
    <text evidence="11">Expression is positively regulated by the azaphilone pigments (MonAzPs) gene cluster-specific transcription regulator pigB.</text>
</comment>
<comment type="biotechnology">
    <text evidence="4 5 6 7 8 12">As colorants, MonAzPs are widely used in various food products for centuries (PubMed:37087240). Moreover, MonAzPs also possess wide-ranging biological activities such as antibacterial activity, preventing hypertension, lowering cholesterol levels, causing hypolipidemic effects, and displaying antiobesity and antitumor activities (PubMed:16283302, PubMed:16660141, PubMed:17191930, PubMed:20666456, PubMed:22562164).</text>
</comment>
<comment type="similarity">
    <text evidence="14">Belongs to the zinc-containing alcohol dehydrogenase family.</text>
</comment>
<dbReference type="EC" id="1.-.-.-" evidence="15"/>
<dbReference type="EMBL" id="KX278308">
    <property type="protein sequence ID" value="APZ73943.1"/>
    <property type="molecule type" value="mRNA"/>
</dbReference>
<dbReference type="EMBL" id="MK764691">
    <property type="protein sequence ID" value="QGA67186.1"/>
    <property type="molecule type" value="Genomic_DNA"/>
</dbReference>
<dbReference type="SMR" id="A0A1P8VF85"/>
<dbReference type="GO" id="GO:0016020">
    <property type="term" value="C:membrane"/>
    <property type="evidence" value="ECO:0007669"/>
    <property type="project" value="UniProtKB-SubCell"/>
</dbReference>
<dbReference type="GO" id="GO:0000166">
    <property type="term" value="F:nucleotide binding"/>
    <property type="evidence" value="ECO:0007669"/>
    <property type="project" value="UniProtKB-KW"/>
</dbReference>
<dbReference type="GO" id="GO:0016651">
    <property type="term" value="F:oxidoreductase activity, acting on NAD(P)H"/>
    <property type="evidence" value="ECO:0007669"/>
    <property type="project" value="InterPro"/>
</dbReference>
<dbReference type="GO" id="GO:0031409">
    <property type="term" value="F:pigment binding"/>
    <property type="evidence" value="ECO:0007669"/>
    <property type="project" value="UniProtKB-KW"/>
</dbReference>
<dbReference type="CDD" id="cd08249">
    <property type="entry name" value="enoyl_reductase_like"/>
    <property type="match status" value="1"/>
</dbReference>
<dbReference type="Gene3D" id="3.90.180.10">
    <property type="entry name" value="Medium-chain alcohol dehydrogenases, catalytic domain"/>
    <property type="match status" value="1"/>
</dbReference>
<dbReference type="Gene3D" id="3.40.50.720">
    <property type="entry name" value="NAD(P)-binding Rossmann-like Domain"/>
    <property type="match status" value="1"/>
</dbReference>
<dbReference type="InterPro" id="IPR013149">
    <property type="entry name" value="ADH-like_C"/>
</dbReference>
<dbReference type="InterPro" id="IPR013154">
    <property type="entry name" value="ADH-like_N"/>
</dbReference>
<dbReference type="InterPro" id="IPR011032">
    <property type="entry name" value="GroES-like_sf"/>
</dbReference>
<dbReference type="InterPro" id="IPR036291">
    <property type="entry name" value="NAD(P)-bd_dom_sf"/>
</dbReference>
<dbReference type="InterPro" id="IPR020843">
    <property type="entry name" value="PKS_ER"/>
</dbReference>
<dbReference type="InterPro" id="IPR047122">
    <property type="entry name" value="Trans-enoyl_RdTase-like"/>
</dbReference>
<dbReference type="PANTHER" id="PTHR45348">
    <property type="entry name" value="HYPOTHETICAL OXIDOREDUCTASE (EUROFUNG)"/>
    <property type="match status" value="1"/>
</dbReference>
<dbReference type="PANTHER" id="PTHR45348:SF2">
    <property type="entry name" value="ZINC-TYPE ALCOHOL DEHYDROGENASE-LIKE PROTEIN C2E1P3.01"/>
    <property type="match status" value="1"/>
</dbReference>
<dbReference type="Pfam" id="PF08240">
    <property type="entry name" value="ADH_N"/>
    <property type="match status" value="1"/>
</dbReference>
<dbReference type="Pfam" id="PF00107">
    <property type="entry name" value="ADH_zinc_N"/>
    <property type="match status" value="1"/>
</dbReference>
<dbReference type="SMART" id="SM00829">
    <property type="entry name" value="PKS_ER"/>
    <property type="match status" value="1"/>
</dbReference>
<dbReference type="SUPFAM" id="SSF50129">
    <property type="entry name" value="GroES-like"/>
    <property type="match status" value="1"/>
</dbReference>
<dbReference type="SUPFAM" id="SSF51735">
    <property type="entry name" value="NAD(P)-binding Rossmann-fold domains"/>
    <property type="match status" value="1"/>
</dbReference>
<reference key="1">
    <citation type="submission" date="2016-05" db="EMBL/GenBank/DDBJ databases">
        <title>The biosynthetic steps of Monascus azahpilone pigments in fungi.</title>
        <authorList>
            <person name="Chen W."/>
            <person name="Chen F."/>
        </authorList>
    </citation>
    <scope>NUCLEOTIDE SEQUENCE [MRNA]</scope>
    <source>
        <strain>M7</strain>
    </source>
</reference>
<reference key="2">
    <citation type="submission" date="2019-04" db="EMBL/GenBank/DDBJ databases">
        <authorList>
            <person name="Guo X."/>
            <person name="Chen M."/>
            <person name="Ma X."/>
        </authorList>
    </citation>
    <scope>NUCLEOTIDE SEQUENCE [GENOMIC DNA]</scope>
    <source>
        <strain>CGMCC 3.19587</strain>
    </source>
</reference>
<reference key="3">
    <citation type="journal article" date="1977" name="Plant Physiol.">
        <title>Pigmentation and antibacterial activity of fast neutron- and X-ray-induced strains of Monascus purpureus went.</title>
        <authorList>
            <person name="Wong H.C."/>
            <person name="Bau Y.S."/>
        </authorList>
    </citation>
    <scope>BIOTECHNOLOGY</scope>
</reference>
<reference key="4">
    <citation type="journal article" date="2005" name="Chem. Biodivers.">
        <title>Anti-tumor-initiating effects of monascin, an azaphilonoid pigment from the extract of Monascus pilosus fermented rice (red-mold rice).</title>
        <authorList>
            <person name="Akihisa T."/>
            <person name="Tokuda H."/>
            <person name="Ukiya M."/>
            <person name="Kiyota A."/>
            <person name="Yasukawa K."/>
            <person name="Sakamoto N."/>
            <person name="Kimura Y."/>
            <person name="Suzuki T."/>
            <person name="Takayasu J."/>
            <person name="Nishino H."/>
        </authorList>
    </citation>
    <scope>BIOTECHNOLOGY</scope>
</reference>
<reference key="5">
    <citation type="journal article" date="2006" name="Appl. Microbiol. Biotechnol.">
        <title>In vivo hypolipidemic effects and safety of low dosage Monascus powder in a hamster model of hyperlipidemia.</title>
        <authorList>
            <person name="Lee C.L."/>
            <person name="Tsai T.Y."/>
            <person name="Wang J.J."/>
            <person name="Pan T.M."/>
        </authorList>
    </citation>
    <scope>BIOTECHNOLOGY</scope>
</reference>
<reference key="6">
    <citation type="journal article" date="2010" name="J. Agric. Food Chem.">
        <title>Monascin and ankaflavin act as novel hypolipidemic and high-density lipoprotein cholesterol-raising agents in red mold dioscorea.</title>
        <authorList>
            <person name="Lee C.L."/>
            <person name="Kung Y.H."/>
            <person name="Wu C.L."/>
            <person name="Hsu Y.W."/>
            <person name="Pan T.M."/>
        </authorList>
    </citation>
    <scope>BIOTECHNOLOGY</scope>
</reference>
<reference key="7">
    <citation type="journal article" date="2012" name="Appl. Microbiol. Biotechnol.">
        <title>Development of Monascus fermentation technology for high hypolipidemic effect.</title>
        <authorList>
            <person name="Lee C.L."/>
            <person name="Pan T.M."/>
        </authorList>
    </citation>
    <scope>BIOTECHNOLOGY</scope>
</reference>
<reference key="8">
    <citation type="journal article" date="2016" name="Appl. Microbiol. Biotechnol.">
        <title>Identification and role analysis of an intermediate produced by a polygenic mutant of Monascus pigments cluster in Monascus ruber M7.</title>
        <authorList>
            <person name="Liu J."/>
            <person name="Zhou Y."/>
            <person name="Yi T."/>
            <person name="Zhao M."/>
            <person name="Xie N."/>
            <person name="Lei M."/>
            <person name="Liu Q."/>
            <person name="Shao Y."/>
            <person name="Chen F."/>
        </authorList>
    </citation>
    <scope>FUNCTION</scope>
    <scope>PATHWAY</scope>
</reference>
<reference key="9">
    <citation type="journal article" date="2017" name="Chem. Sci.">
        <title>Orange, red, yellow: biosynthesis of azaphilone pigments in Monascus fungi.</title>
        <authorList>
            <person name="Chen W."/>
            <person name="Chen R."/>
            <person name="Liu Q."/>
            <person name="He Y."/>
            <person name="He K."/>
            <person name="Ding X."/>
            <person name="Kang L."/>
            <person name="Guo X."/>
            <person name="Xie N."/>
            <person name="Zhou Y."/>
            <person name="Lu Y."/>
            <person name="Cox R.J."/>
            <person name="Molnar I."/>
            <person name="Li M."/>
            <person name="Shao Y."/>
            <person name="Chen F."/>
        </authorList>
    </citation>
    <scope>FUNCTION</scope>
    <scope>PATHWAY</scope>
</reference>
<reference key="10">
    <citation type="journal article" date="2021" name="Front. Microbiol.">
        <title>An integrated approach to determine the boundaries of the azaphilone pigment biosynthetic gene cluster of Monascus ruber M7 gown on potato dextrose agar.</title>
        <authorList>
            <person name="Liu Q."/>
            <person name="Zhong S."/>
            <person name="Wang X."/>
            <person name="Gao S."/>
            <person name="Yang X."/>
            <person name="Chen F."/>
            <person name="Molnar I."/>
        </authorList>
    </citation>
    <scope>FUNCTION</scope>
    <scope>INDUCTION</scope>
</reference>
<reference key="11">
    <citation type="journal article" date="2023" name="Food Res. Intern.">
        <title>Improved natural food colorant production in the filamentous fungus Monascus ruber using CRISPR-based engineering.</title>
        <authorList>
            <person name="Ree Yoon H."/>
            <person name="Han S."/>
            <person name="Chul Shin S."/>
            <person name="Cheong Yeom S."/>
            <person name="Jin Kim H."/>
        </authorList>
    </citation>
    <scope>BIOTECHNOLOGY</scope>
</reference>
<keyword id="KW-0325">Glycoprotein</keyword>
<keyword id="KW-0472">Membrane</keyword>
<keyword id="KW-0521">NADP</keyword>
<keyword id="KW-0547">Nucleotide-binding</keyword>
<keyword id="KW-0560">Oxidoreductase</keyword>
<keyword id="KW-0608">Pigment</keyword>
<keyword id="KW-0812">Transmembrane</keyword>
<keyword id="KW-1133">Transmembrane helix</keyword>
<organism>
    <name type="scientific">Monascus ruber</name>
    <name type="common">Mold</name>
    <dbReference type="NCBI Taxonomy" id="89489"/>
    <lineage>
        <taxon>Eukaryota</taxon>
        <taxon>Fungi</taxon>
        <taxon>Dikarya</taxon>
        <taxon>Ascomycota</taxon>
        <taxon>Pezizomycotina</taxon>
        <taxon>Eurotiomycetes</taxon>
        <taxon>Eurotiomycetidae</taxon>
        <taxon>Eurotiales</taxon>
        <taxon>Aspergillaceae</taxon>
        <taxon>Monascus</taxon>
    </lineage>
</organism>
<evidence type="ECO:0000250" key="1">
    <source>
        <dbReference type="UniProtKB" id="Q9Y7D0"/>
    </source>
</evidence>
<evidence type="ECO:0000255" key="2"/>
<evidence type="ECO:0000255" key="3">
    <source>
        <dbReference type="PROSITE-ProRule" id="PRU00498"/>
    </source>
</evidence>
<evidence type="ECO:0000269" key="4">
    <source>
    </source>
</evidence>
<evidence type="ECO:0000269" key="5">
    <source>
    </source>
</evidence>
<evidence type="ECO:0000269" key="6">
    <source>
    </source>
</evidence>
<evidence type="ECO:0000269" key="7">
    <source>
    </source>
</evidence>
<evidence type="ECO:0000269" key="8">
    <source>
    </source>
</evidence>
<evidence type="ECO:0000269" key="9">
    <source>
    </source>
</evidence>
<evidence type="ECO:0000269" key="10">
    <source>
    </source>
</evidence>
<evidence type="ECO:0000269" key="11">
    <source>
    </source>
</evidence>
<evidence type="ECO:0000269" key="12">
    <source>
    </source>
</evidence>
<evidence type="ECO:0000303" key="13">
    <source>
    </source>
</evidence>
<evidence type="ECO:0000305" key="14"/>
<evidence type="ECO:0000305" key="15">
    <source>
    </source>
</evidence>
<name>PIGH_MONRU</name>
<proteinExistence type="evidence at protein level"/>
<feature type="chain" id="PRO_0000460215" description="Dehydrogenase pigH">
    <location>
        <begin position="1"/>
        <end position="369"/>
    </location>
</feature>
<feature type="transmembrane region" description="Helical" evidence="2">
    <location>
        <begin position="280"/>
        <end position="300"/>
    </location>
</feature>
<feature type="domain" description="Enoyl reductase (ER)" evidence="2">
    <location>
        <begin position="13"/>
        <end position="367"/>
    </location>
</feature>
<feature type="binding site" evidence="1">
    <location>
        <begin position="44"/>
        <end position="49"/>
    </location>
    <ligand>
        <name>NADP(+)</name>
        <dbReference type="ChEBI" id="CHEBI:58349"/>
    </ligand>
</feature>
<feature type="binding site" evidence="1">
    <location>
        <begin position="197"/>
        <end position="200"/>
    </location>
    <ligand>
        <name>NADP(+)</name>
        <dbReference type="ChEBI" id="CHEBI:58349"/>
    </ligand>
</feature>
<feature type="binding site" evidence="1">
    <location>
        <position position="215"/>
    </location>
    <ligand>
        <name>NADP(+)</name>
        <dbReference type="ChEBI" id="CHEBI:58349"/>
    </ligand>
</feature>
<feature type="binding site" evidence="1">
    <location>
        <begin position="360"/>
        <end position="361"/>
    </location>
    <ligand>
        <name>NADP(+)</name>
        <dbReference type="ChEBI" id="CHEBI:58349"/>
    </ligand>
</feature>
<feature type="glycosylation site" description="N-linked (GlcNAc...) asparagine" evidence="3">
    <location>
        <position position="79"/>
    </location>
</feature>
<feature type="glycosylation site" description="N-linked (GlcNAc...) asparagine" evidence="3">
    <location>
        <position position="101"/>
    </location>
</feature>
<gene>
    <name evidence="13" type="primary">pigH</name>
</gene>
<protein>
    <recommendedName>
        <fullName evidence="13">Dehydrogenase pigH</fullName>
        <ecNumber evidence="15">1.-.-.-</ecNumber>
    </recommendedName>
    <alternativeName>
        <fullName evidence="13">Azaphilone pigments biosynthesis cluster protein H</fullName>
    </alternativeName>
</protein>
<sequence length="369" mass="39423">MPTNRAAWQPAKKAPLLEVKAAPYPPPKANRIVVKNGAVAVNPIDWLIQSKGDIMFTWLKYPFVLGSDVAGEVVEVGKNVTRFQVGDRVLGFARGTDEKVNDSSEGAFQEYTVLVPDLTAHIPSSLSFESAAVIPLGLATAGAGLFQQDQLGLQLPTSPARPPTGQTVLIWGGSTSVGSNAIQLAVAAGYEVFTTASRKNFEYAAKLGAAKVFDYRSGSVTQDIIRAFKGRTSAGALAIGQGGAEACMEVLDHVQGRKFIALASYPVPQEEPKRLVMLRTIIFFVSWIISFKFKGLLKGIKSNFIFATSVNHNGIGKALFVDFLPDALRAGEFVPAPDAQVAGKGLESIQTAFEQQKQGVSAKKIVVSL</sequence>